<dbReference type="EC" id="3.5.4.5" evidence="3 4 5"/>
<dbReference type="EMBL" id="AJ005261">
    <property type="protein sequence ID" value="CAA06460.1"/>
    <property type="molecule type" value="mRNA"/>
</dbReference>
<dbReference type="EMBL" id="AJ005687">
    <property type="protein sequence ID" value="CAA06671.1"/>
    <property type="molecule type" value="Genomic_DNA"/>
</dbReference>
<dbReference type="EMBL" id="AF134487">
    <property type="protein sequence ID" value="AAF03358.1"/>
    <property type="molecule type" value="mRNA"/>
</dbReference>
<dbReference type="EMBL" id="AF121878">
    <property type="protein sequence ID" value="AAD30449.1"/>
    <property type="status" value="ALT_SEQ"/>
    <property type="molecule type" value="mRNA"/>
</dbReference>
<dbReference type="EMBL" id="AC005917">
    <property type="protein sequence ID" value="AAD10156.1"/>
    <property type="molecule type" value="Genomic_DNA"/>
</dbReference>
<dbReference type="EMBL" id="CP002685">
    <property type="protein sequence ID" value="AEC06896.1"/>
    <property type="molecule type" value="Genomic_DNA"/>
</dbReference>
<dbReference type="EMBL" id="AY128366">
    <property type="protein sequence ID" value="AAM91569.1"/>
    <property type="molecule type" value="mRNA"/>
</dbReference>
<dbReference type="EMBL" id="BT008708">
    <property type="protein sequence ID" value="AAP42721.1"/>
    <property type="molecule type" value="mRNA"/>
</dbReference>
<dbReference type="EMBL" id="AY085453">
    <property type="protein sequence ID" value="AAM62679.1"/>
    <property type="molecule type" value="mRNA"/>
</dbReference>
<dbReference type="PIR" id="T51733">
    <property type="entry name" value="T51733"/>
</dbReference>
<dbReference type="RefSeq" id="NP_179547.1">
    <property type="nucleotide sequence ID" value="NM_127515.4"/>
</dbReference>
<dbReference type="PDB" id="6L08">
    <property type="method" value="X-ray"/>
    <property type="resolution" value="3.00 A"/>
    <property type="chains" value="A/B=1-301"/>
</dbReference>
<dbReference type="PDBsum" id="6L08"/>
<dbReference type="SMR" id="O65896"/>
<dbReference type="FunCoup" id="O65896">
    <property type="interactions" value="225"/>
</dbReference>
<dbReference type="IntAct" id="O65896">
    <property type="interactions" value="1"/>
</dbReference>
<dbReference type="STRING" id="3702.O65896"/>
<dbReference type="PaxDb" id="3702-AT2G19570.1"/>
<dbReference type="ProteomicsDB" id="223879"/>
<dbReference type="EnsemblPlants" id="AT2G19570.1">
    <property type="protein sequence ID" value="AT2G19570.1"/>
    <property type="gene ID" value="AT2G19570"/>
</dbReference>
<dbReference type="GeneID" id="816476"/>
<dbReference type="Gramene" id="AT2G19570.1">
    <property type="protein sequence ID" value="AT2G19570.1"/>
    <property type="gene ID" value="AT2G19570"/>
</dbReference>
<dbReference type="KEGG" id="ath:AT2G19570"/>
<dbReference type="Araport" id="AT2G19570"/>
<dbReference type="TAIR" id="AT2G19570">
    <property type="gene designation" value="CDA1"/>
</dbReference>
<dbReference type="eggNOG" id="KOG0833">
    <property type="taxonomic scope" value="Eukaryota"/>
</dbReference>
<dbReference type="HOGENOM" id="CLU_052424_1_0_1"/>
<dbReference type="InParanoid" id="O65896"/>
<dbReference type="OMA" id="NYSPCGH"/>
<dbReference type="OrthoDB" id="414540at2759"/>
<dbReference type="PhylomeDB" id="O65896"/>
<dbReference type="BioCyc" id="ARA:AT2G19570-MONOMER"/>
<dbReference type="BioCyc" id="MetaCyc:AT2G19570-MONOMER"/>
<dbReference type="PRO" id="PR:O65896"/>
<dbReference type="Proteomes" id="UP000006548">
    <property type="component" value="Chromosome 2"/>
</dbReference>
<dbReference type="ExpressionAtlas" id="O65896">
    <property type="expression patterns" value="baseline and differential"/>
</dbReference>
<dbReference type="GO" id="GO:0005829">
    <property type="term" value="C:cytosol"/>
    <property type="evidence" value="ECO:0000314"/>
    <property type="project" value="TAIR"/>
</dbReference>
<dbReference type="GO" id="GO:0005739">
    <property type="term" value="C:mitochondrion"/>
    <property type="evidence" value="ECO:0007005"/>
    <property type="project" value="TAIR"/>
</dbReference>
<dbReference type="GO" id="GO:0004126">
    <property type="term" value="F:cytidine deaminase activity"/>
    <property type="evidence" value="ECO:0000314"/>
    <property type="project" value="TAIR"/>
</dbReference>
<dbReference type="GO" id="GO:0042803">
    <property type="term" value="F:protein homodimerization activity"/>
    <property type="evidence" value="ECO:0000353"/>
    <property type="project" value="UniProtKB"/>
</dbReference>
<dbReference type="GO" id="GO:0008270">
    <property type="term" value="F:zinc ion binding"/>
    <property type="evidence" value="ECO:0000314"/>
    <property type="project" value="UniProtKB"/>
</dbReference>
<dbReference type="GO" id="GO:0006216">
    <property type="term" value="P:cytidine catabolic process"/>
    <property type="evidence" value="ECO:0000315"/>
    <property type="project" value="TAIR"/>
</dbReference>
<dbReference type="GO" id="GO:0009972">
    <property type="term" value="P:cytidine deamination"/>
    <property type="evidence" value="ECO:0000314"/>
    <property type="project" value="TAIR"/>
</dbReference>
<dbReference type="CDD" id="cd01283">
    <property type="entry name" value="cytidine_deaminase"/>
    <property type="match status" value="2"/>
</dbReference>
<dbReference type="FunFam" id="3.40.140.10:FF:000006">
    <property type="entry name" value="Cytidine deaminase"/>
    <property type="match status" value="1"/>
</dbReference>
<dbReference type="FunFam" id="3.40.140.10:FF:000041">
    <property type="entry name" value="Cytidine deaminase"/>
    <property type="match status" value="1"/>
</dbReference>
<dbReference type="Gene3D" id="3.40.140.10">
    <property type="entry name" value="Cytidine Deaminase, domain 2"/>
    <property type="match status" value="2"/>
</dbReference>
<dbReference type="InterPro" id="IPR016192">
    <property type="entry name" value="APOBEC/CMP_deaminase_Zn-bd"/>
</dbReference>
<dbReference type="InterPro" id="IPR002125">
    <property type="entry name" value="CMP_dCMP_dom"/>
</dbReference>
<dbReference type="InterPro" id="IPR013171">
    <property type="entry name" value="Cyd/dCyd_deaminase_Zn-bd"/>
</dbReference>
<dbReference type="InterPro" id="IPR050202">
    <property type="entry name" value="Cyt/Deoxycyt_deaminase"/>
</dbReference>
<dbReference type="InterPro" id="IPR006263">
    <property type="entry name" value="Cyt_deam_dimer"/>
</dbReference>
<dbReference type="InterPro" id="IPR016193">
    <property type="entry name" value="Cytidine_deaminase-like"/>
</dbReference>
<dbReference type="NCBIfam" id="TIGR01355">
    <property type="entry name" value="cyt_deam_dimer"/>
    <property type="match status" value="1"/>
</dbReference>
<dbReference type="NCBIfam" id="NF006537">
    <property type="entry name" value="PRK09027.1"/>
    <property type="match status" value="1"/>
</dbReference>
<dbReference type="PANTHER" id="PTHR11644">
    <property type="entry name" value="CYTIDINE DEAMINASE"/>
    <property type="match status" value="1"/>
</dbReference>
<dbReference type="PANTHER" id="PTHR11644:SF2">
    <property type="entry name" value="CYTIDINE DEAMINASE"/>
    <property type="match status" value="1"/>
</dbReference>
<dbReference type="Pfam" id="PF00383">
    <property type="entry name" value="dCMP_cyt_deam_1"/>
    <property type="match status" value="1"/>
</dbReference>
<dbReference type="Pfam" id="PF08211">
    <property type="entry name" value="dCMP_cyt_deam_2"/>
    <property type="match status" value="1"/>
</dbReference>
<dbReference type="PIRSF" id="PIRSF006334">
    <property type="entry name" value="Cdd_plus_pseudo"/>
    <property type="match status" value="1"/>
</dbReference>
<dbReference type="SUPFAM" id="SSF53927">
    <property type="entry name" value="Cytidine deaminase-like"/>
    <property type="match status" value="2"/>
</dbReference>
<dbReference type="PROSITE" id="PS00903">
    <property type="entry name" value="CYT_DCMP_DEAMINASES_1"/>
    <property type="match status" value="1"/>
</dbReference>
<dbReference type="PROSITE" id="PS51747">
    <property type="entry name" value="CYT_DCMP_DEAMINASES_2"/>
    <property type="match status" value="2"/>
</dbReference>
<feature type="chain" id="PRO_0000429143" description="Cytidine deaminase 1">
    <location>
        <begin position="1"/>
        <end position="301"/>
    </location>
</feature>
<feature type="domain" description="CMP/dCMP-type deaminase 1" evidence="2">
    <location>
        <begin position="23"/>
        <end position="156"/>
    </location>
</feature>
<feature type="domain" description="CMP/dCMP-type deaminase 2" evidence="2">
    <location>
        <begin position="188"/>
        <end position="301"/>
    </location>
</feature>
<feature type="active site" description="Proton donor" evidence="1">
    <location>
        <position position="79"/>
    </location>
</feature>
<feature type="binding site" evidence="1">
    <location>
        <begin position="64"/>
        <end position="66"/>
    </location>
    <ligand>
        <name>substrate</name>
    </ligand>
</feature>
<feature type="binding site" evidence="1">
    <location>
        <position position="77"/>
    </location>
    <ligand>
        <name>Zn(2+)</name>
        <dbReference type="ChEBI" id="CHEBI:29105"/>
        <note>catalytic</note>
    </ligand>
</feature>
<feature type="binding site" evidence="1">
    <location>
        <position position="104"/>
    </location>
    <ligand>
        <name>Zn(2+)</name>
        <dbReference type="ChEBI" id="CHEBI:29105"/>
        <note>catalytic</note>
    </ligand>
</feature>
<feature type="binding site" evidence="1">
    <location>
        <position position="107"/>
    </location>
    <ligand>
        <name>Zn(2+)</name>
        <dbReference type="ChEBI" id="CHEBI:29105"/>
        <note>catalytic</note>
    </ligand>
</feature>
<feature type="sequence conflict" description="In Ref. 8; AAM62679." evidence="8" ref="8">
    <original>E</original>
    <variation>K</variation>
    <location>
        <position position="270"/>
    </location>
</feature>
<feature type="sequence conflict" description="In Ref. 8; AAM62679." evidence="8" ref="8">
    <original>F</original>
    <variation>Y</variation>
    <location>
        <position position="293"/>
    </location>
</feature>
<feature type="strand" evidence="11">
    <location>
        <begin position="6"/>
        <end position="8"/>
    </location>
</feature>
<feature type="helix" evidence="11">
    <location>
        <begin position="10"/>
        <end position="20"/>
    </location>
</feature>
<feature type="turn" evidence="11">
    <location>
        <begin position="25"/>
        <end position="27"/>
    </location>
</feature>
<feature type="helix" evidence="11">
    <location>
        <begin position="28"/>
        <end position="31"/>
    </location>
</feature>
<feature type="helix" evidence="11">
    <location>
        <begin position="32"/>
        <end position="35"/>
    </location>
</feature>
<feature type="helix" evidence="11">
    <location>
        <begin position="36"/>
        <end position="38"/>
    </location>
</feature>
<feature type="turn" evidence="11">
    <location>
        <begin position="42"/>
        <end position="44"/>
    </location>
</feature>
<feature type="strand" evidence="11">
    <location>
        <begin position="49"/>
        <end position="57"/>
    </location>
</feature>
<feature type="strand" evidence="11">
    <location>
        <begin position="59"/>
        <end position="63"/>
    </location>
</feature>
<feature type="helix" evidence="11">
    <location>
        <begin position="72"/>
        <end position="74"/>
    </location>
</feature>
<feature type="helix" evidence="11">
    <location>
        <begin position="78"/>
        <end position="88"/>
    </location>
</feature>
<feature type="strand" evidence="11">
    <location>
        <begin position="94"/>
        <end position="101"/>
    </location>
</feature>
<feature type="helix" evidence="11">
    <location>
        <begin position="105"/>
        <end position="110"/>
    </location>
</feature>
<feature type="helix" evidence="11">
    <location>
        <begin position="111"/>
        <end position="113"/>
    </location>
</feature>
<feature type="helix" evidence="11">
    <location>
        <begin position="117"/>
        <end position="119"/>
    </location>
</feature>
<feature type="strand" evidence="11">
    <location>
        <begin position="121"/>
        <end position="124"/>
    </location>
</feature>
<feature type="strand" evidence="11">
    <location>
        <begin position="139"/>
        <end position="141"/>
    </location>
</feature>
<feature type="helix" evidence="11">
    <location>
        <begin position="145"/>
        <end position="148"/>
    </location>
</feature>
<feature type="helix" evidence="11">
    <location>
        <begin position="155"/>
        <end position="157"/>
    </location>
</feature>
<feature type="strand" evidence="11">
    <location>
        <begin position="165"/>
        <end position="167"/>
    </location>
</feature>
<feature type="helix" evidence="11">
    <location>
        <begin position="194"/>
        <end position="202"/>
    </location>
</feature>
<feature type="strand" evidence="11">
    <location>
        <begin position="207"/>
        <end position="210"/>
    </location>
</feature>
<feature type="strand" evidence="11">
    <location>
        <begin position="233"/>
        <end position="237"/>
    </location>
</feature>
<feature type="helix" evidence="11">
    <location>
        <begin position="243"/>
        <end position="250"/>
    </location>
</feature>
<feature type="strand" evidence="11">
    <location>
        <begin position="253"/>
        <end position="255"/>
    </location>
</feature>
<feature type="helix" evidence="11">
    <location>
        <begin position="277"/>
        <end position="287"/>
    </location>
</feature>
<gene>
    <name type="primary">CDA1</name>
    <name type="synonym">CDD</name>
    <name type="synonym">DESZ</name>
    <name type="ordered locus">At2g19570</name>
    <name type="ORF">F3P11</name>
</gene>
<name>CDA1_ARATH</name>
<reference key="1">
    <citation type="journal article" date="1999" name="Protein Expr. Purif.">
        <title>Cloning, expression, and purification of cytidine deaminase from Arabidopsis thaliana.</title>
        <authorList>
            <person name="Vincenzetti S."/>
            <person name="Cambi A."/>
            <person name="Neuhard J."/>
            <person name="Schnorr K."/>
            <person name="Grelloni M."/>
            <person name="Vita A."/>
        </authorList>
    </citation>
    <scope>NUCLEOTIDE SEQUENCE [MRNA]</scope>
    <scope>FUNCTION</scope>
    <scope>CATALYTIC ACTIVITY</scope>
    <scope>COFACTOR</scope>
    <scope>ACTIVITY REGULATION</scope>
    <scope>BIOPHYSICOCHEMICAL PROPERTIES</scope>
    <source>
        <strain>cv. Columbia</strain>
    </source>
</reference>
<reference key="2">
    <citation type="journal article" date="1999" name="Eur. J. Biochem.">
        <title>A prokaryotic-type cytidine deaminase from Arabidopsis thaliana.</title>
        <authorList>
            <person name="Faivre-Nitschke E.S."/>
            <person name="Grienenberger J.M."/>
            <person name="Gualberto J.M."/>
        </authorList>
    </citation>
    <scope>NUCLEOTIDE SEQUENCE [MRNA]</scope>
    <scope>FUNCTION</scope>
    <scope>CATALYTIC ACTIVITY</scope>
    <scope>ACTIVITY REGULATION</scope>
    <scope>BIOPHYSICOCHEMICAL PROPERTIES</scope>
    <scope>SUBUNIT</scope>
    <scope>TISSUE SPECIFICITY</scope>
    <source>
        <strain>cv. Landsberg erecta</strain>
    </source>
</reference>
<reference key="3">
    <citation type="journal article" date="2000" name="J. Plant Biol.">
        <title>Arabidopsis thaliana cytidine deaminase 1 shows more similarity to prokaryotic enzymes than to eukaryotic enzymes.</title>
        <authorList>
            <person name="Kafer C."/>
            <person name="Thornburg R.W."/>
        </authorList>
    </citation>
    <scope>NUCLEOTIDE SEQUENCE [MRNA]</scope>
    <scope>FUNCTION</scope>
    <scope>CATALYTIC ACTIVITY</scope>
    <scope>BIOPHYSICOCHEMICAL PROPERTIES</scope>
</reference>
<reference key="4">
    <citation type="submission" date="1999-01" db="EMBL/GenBank/DDBJ databases">
        <authorList>
            <person name="Sanchez H."/>
            <person name="Schuster W."/>
        </authorList>
    </citation>
    <scope>NUCLEOTIDE SEQUENCE [MRNA]</scope>
    <source>
        <strain>cv. Columbia</strain>
    </source>
</reference>
<reference key="5">
    <citation type="journal article" date="1999" name="Nature">
        <title>Sequence and analysis of chromosome 2 of the plant Arabidopsis thaliana.</title>
        <authorList>
            <person name="Lin X."/>
            <person name="Kaul S."/>
            <person name="Rounsley S.D."/>
            <person name="Shea T.P."/>
            <person name="Benito M.-I."/>
            <person name="Town C.D."/>
            <person name="Fujii C.Y."/>
            <person name="Mason T.M."/>
            <person name="Bowman C.L."/>
            <person name="Barnstead M.E."/>
            <person name="Feldblyum T.V."/>
            <person name="Buell C.R."/>
            <person name="Ketchum K.A."/>
            <person name="Lee J.J."/>
            <person name="Ronning C.M."/>
            <person name="Koo H.L."/>
            <person name="Moffat K.S."/>
            <person name="Cronin L.A."/>
            <person name="Shen M."/>
            <person name="Pai G."/>
            <person name="Van Aken S."/>
            <person name="Umayam L."/>
            <person name="Tallon L.J."/>
            <person name="Gill J.E."/>
            <person name="Adams M.D."/>
            <person name="Carrera A.J."/>
            <person name="Creasy T.H."/>
            <person name="Goodman H.M."/>
            <person name="Somerville C.R."/>
            <person name="Copenhaver G.P."/>
            <person name="Preuss D."/>
            <person name="Nierman W.C."/>
            <person name="White O."/>
            <person name="Eisen J.A."/>
            <person name="Salzberg S.L."/>
            <person name="Fraser C.M."/>
            <person name="Venter J.C."/>
        </authorList>
    </citation>
    <scope>NUCLEOTIDE SEQUENCE [LARGE SCALE GENOMIC DNA]</scope>
    <source>
        <strain>cv. Columbia</strain>
    </source>
</reference>
<reference key="6">
    <citation type="journal article" date="2017" name="Plant J.">
        <title>Araport11: a complete reannotation of the Arabidopsis thaliana reference genome.</title>
        <authorList>
            <person name="Cheng C.Y."/>
            <person name="Krishnakumar V."/>
            <person name="Chan A.P."/>
            <person name="Thibaud-Nissen F."/>
            <person name="Schobel S."/>
            <person name="Town C.D."/>
        </authorList>
    </citation>
    <scope>GENOME REANNOTATION</scope>
    <source>
        <strain>cv. Columbia</strain>
    </source>
</reference>
<reference key="7">
    <citation type="journal article" date="2003" name="Science">
        <title>Empirical analysis of transcriptional activity in the Arabidopsis genome.</title>
        <authorList>
            <person name="Yamada K."/>
            <person name="Lim J."/>
            <person name="Dale J.M."/>
            <person name="Chen H."/>
            <person name="Shinn P."/>
            <person name="Palm C.J."/>
            <person name="Southwick A.M."/>
            <person name="Wu H.C."/>
            <person name="Kim C.J."/>
            <person name="Nguyen M."/>
            <person name="Pham P.K."/>
            <person name="Cheuk R.F."/>
            <person name="Karlin-Newmann G."/>
            <person name="Liu S.X."/>
            <person name="Lam B."/>
            <person name="Sakano H."/>
            <person name="Wu T."/>
            <person name="Yu G."/>
            <person name="Miranda M."/>
            <person name="Quach H.L."/>
            <person name="Tripp M."/>
            <person name="Chang C.H."/>
            <person name="Lee J.M."/>
            <person name="Toriumi M.J."/>
            <person name="Chan M.M."/>
            <person name="Tang C.C."/>
            <person name="Onodera C.S."/>
            <person name="Deng J.M."/>
            <person name="Akiyama K."/>
            <person name="Ansari Y."/>
            <person name="Arakawa T."/>
            <person name="Banh J."/>
            <person name="Banno F."/>
            <person name="Bowser L."/>
            <person name="Brooks S.Y."/>
            <person name="Carninci P."/>
            <person name="Chao Q."/>
            <person name="Choy N."/>
            <person name="Enju A."/>
            <person name="Goldsmith A.D."/>
            <person name="Gurjal M."/>
            <person name="Hansen N.F."/>
            <person name="Hayashizaki Y."/>
            <person name="Johnson-Hopson C."/>
            <person name="Hsuan V.W."/>
            <person name="Iida K."/>
            <person name="Karnes M."/>
            <person name="Khan S."/>
            <person name="Koesema E."/>
            <person name="Ishida J."/>
            <person name="Jiang P.X."/>
            <person name="Jones T."/>
            <person name="Kawai J."/>
            <person name="Kamiya A."/>
            <person name="Meyers C."/>
            <person name="Nakajima M."/>
            <person name="Narusaka M."/>
            <person name="Seki M."/>
            <person name="Sakurai T."/>
            <person name="Satou M."/>
            <person name="Tamse R."/>
            <person name="Vaysberg M."/>
            <person name="Wallender E.K."/>
            <person name="Wong C."/>
            <person name="Yamamura Y."/>
            <person name="Yuan S."/>
            <person name="Shinozaki K."/>
            <person name="Davis R.W."/>
            <person name="Theologis A."/>
            <person name="Ecker J.R."/>
        </authorList>
    </citation>
    <scope>NUCLEOTIDE SEQUENCE [LARGE SCALE MRNA]</scope>
    <source>
        <strain>cv. Columbia</strain>
    </source>
</reference>
<reference key="8">
    <citation type="submission" date="2002-03" db="EMBL/GenBank/DDBJ databases">
        <title>Full-length cDNA from Arabidopsis thaliana.</title>
        <authorList>
            <person name="Brover V.V."/>
            <person name="Troukhan M.E."/>
            <person name="Alexandrov N.A."/>
            <person name="Lu Y.-P."/>
            <person name="Flavell R.B."/>
            <person name="Feldmann K.A."/>
        </authorList>
    </citation>
    <scope>NUCLEOTIDE SEQUENCE [LARGE SCALE MRNA]</scope>
</reference>
<sequence>MDKPSFVIQSKEAESAAKQLGVSVIQLLPSLVKPAQSYARTPISKFNVAVVGLGSSGRIFLGVNVEFPNLPLHHSIHAEQFLVTNLTLNGERHLNFFAVSAAPCGHCRQFLQEIRDAPEIKILITDPNNSADSDSAADSDGFLRLGSFLPHRFGPDDLLGKDHPLLLESHDNHLKISDLDSICNGNTDSSADLKQTALAAANRSYAPYSLCPSGVSLVDCDGKVYRGWYMESAAYNPSMGPVQAALVDYVANGGGGGYERIVGAVLVEKEDAVVRQEHTARLLLETISPKCEFKVFHCYEA</sequence>
<protein>
    <recommendedName>
        <fullName evidence="6 7">Cytidine deaminase 1</fullName>
        <shortName evidence="6 7">At-CDA1</shortName>
        <ecNumber evidence="3 4 5">3.5.4.5</ecNumber>
    </recommendedName>
</protein>
<evidence type="ECO:0000250" key="1"/>
<evidence type="ECO:0000255" key="2">
    <source>
        <dbReference type="PROSITE-ProRule" id="PRU01083"/>
    </source>
</evidence>
<evidence type="ECO:0000269" key="3">
    <source>
    </source>
</evidence>
<evidence type="ECO:0000269" key="4">
    <source>
    </source>
</evidence>
<evidence type="ECO:0000269" key="5">
    <source ref="3"/>
</evidence>
<evidence type="ECO:0000303" key="6">
    <source>
    </source>
</evidence>
<evidence type="ECO:0000303" key="7">
    <source>
    </source>
</evidence>
<evidence type="ECO:0000305" key="8"/>
<evidence type="ECO:0000305" key="9">
    <source>
    </source>
</evidence>
<evidence type="ECO:0000305" key="10">
    <source>
    </source>
</evidence>
<evidence type="ECO:0007829" key="11">
    <source>
        <dbReference type="PDB" id="6L08"/>
    </source>
</evidence>
<organism>
    <name type="scientific">Arabidopsis thaliana</name>
    <name type="common">Mouse-ear cress</name>
    <dbReference type="NCBI Taxonomy" id="3702"/>
    <lineage>
        <taxon>Eukaryota</taxon>
        <taxon>Viridiplantae</taxon>
        <taxon>Streptophyta</taxon>
        <taxon>Embryophyta</taxon>
        <taxon>Tracheophyta</taxon>
        <taxon>Spermatophyta</taxon>
        <taxon>Magnoliopsida</taxon>
        <taxon>eudicotyledons</taxon>
        <taxon>Gunneridae</taxon>
        <taxon>Pentapetalae</taxon>
        <taxon>rosids</taxon>
        <taxon>malvids</taxon>
        <taxon>Brassicales</taxon>
        <taxon>Brassicaceae</taxon>
        <taxon>Camelineae</taxon>
        <taxon>Arabidopsis</taxon>
    </lineage>
</organism>
<accession>O65896</accession>
<accession>Q8LEF2</accession>
<accession>Q9XEX5</accession>
<comment type="function">
    <text evidence="3 4 5">This enzyme scavenges exogenous and endogenous cytidine and 2'-deoxycytidine for UMP synthesis. Functions as a conventional cytidine deaminase. Has no affinity for RNA and is not involved in RNA-editing by C-to-U deamination.</text>
</comment>
<comment type="catalytic activity">
    <reaction evidence="3 4 5">
        <text>cytidine + H2O + H(+) = uridine + NH4(+)</text>
        <dbReference type="Rhea" id="RHEA:16069"/>
        <dbReference type="ChEBI" id="CHEBI:15377"/>
        <dbReference type="ChEBI" id="CHEBI:15378"/>
        <dbReference type="ChEBI" id="CHEBI:16704"/>
        <dbReference type="ChEBI" id="CHEBI:17562"/>
        <dbReference type="ChEBI" id="CHEBI:28938"/>
        <dbReference type="EC" id="3.5.4.5"/>
    </reaction>
    <physiologicalReaction direction="left-to-right" evidence="3 4 5">
        <dbReference type="Rhea" id="RHEA:16070"/>
    </physiologicalReaction>
</comment>
<comment type="catalytic activity">
    <reaction evidence="3 4 5">
        <text>2'-deoxycytidine + H2O + H(+) = 2'-deoxyuridine + NH4(+)</text>
        <dbReference type="Rhea" id="RHEA:13433"/>
        <dbReference type="ChEBI" id="CHEBI:15377"/>
        <dbReference type="ChEBI" id="CHEBI:15378"/>
        <dbReference type="ChEBI" id="CHEBI:15698"/>
        <dbReference type="ChEBI" id="CHEBI:16450"/>
        <dbReference type="ChEBI" id="CHEBI:28938"/>
        <dbReference type="EC" id="3.5.4.5"/>
    </reaction>
    <physiologicalReaction direction="left-to-right" evidence="3 4 5">
        <dbReference type="Rhea" id="RHEA:13434"/>
    </physiologicalReaction>
</comment>
<comment type="cofactor">
    <cofactor evidence="9">
        <name>Zn(2+)</name>
        <dbReference type="ChEBI" id="CHEBI:29105"/>
    </cofactor>
    <text evidence="9">Binds 1 zinc ion per subunit.</text>
</comment>
<comment type="activity regulation">
    <text evidence="3 4">Inhibited by uridine, CMP and dCMP.</text>
</comment>
<comment type="biophysicochemical properties">
    <kinetics>
        <KM evidence="3">150 uM for cytidine (at pH 7.5 and 37 degrees Celsius)</KM>
        <KM evidence="4">250 uM for cytidine (at pH 7.5 and 25 degrees Celsius)</KM>
        <KM evidence="5">226.1 uM for cytidine (at pH 8.0 and 25 degrees Celsius)</KM>
        <KM evidence="3">75 uM for 2'-deoxycytidine (at pH 7.5 and 37 degrees Celsius)</KM>
        <KM evidence="4">120 uM for 2'-deoxycytidine (at pH 7.5 and 25 degrees Celsius)</KM>
        <KM evidence="5">49.3 uM for 2'-deoxycytidine (at pH 8.0 and 25 degrees Celsius)</KM>
        <Vmax evidence="3">59.5 umol/min/mg enzyme toward cytidine (at pH 7.5 and 37 degrees Celsius)</Vmax>
        <Vmax evidence="4">58.0 umol/min/mg enzyme toward cytidine (at pH 7.5 and 25 degrees Celsius)</Vmax>
        <Vmax evidence="5">39.7 umol/min/mg enzyme toward cytidine (at pH 8.0 and 25 degrees Celsius)</Vmax>
        <Vmax evidence="3">49.0 umol/min/mg enzyme toward 2'-deoxycytidine (at pH 7.5 and 37 degrees Celsius)</Vmax>
        <Vmax evidence="4">38.0 umol/min/mg enzyme toward 2'-deoxycytidine (at pH 7.5 and 25 degrees Celsius)</Vmax>
        <Vmax evidence="3 4 5">24.4 umol/min/mg enzyme toward 2'-deoxycytidine (at pH 8.0 and 25 degrees Celsius, Ref.3)</Vmax>
    </kinetics>
    <phDependence>
        <text evidence="3 4 5">Optimum pH is 7.5-8.0.</text>
    </phDependence>
</comment>
<comment type="subunit">
    <text evidence="10">Homodimer.</text>
</comment>
<comment type="tissue specificity">
    <text evidence="4">Expressed in roots, rosette leaves, stems and flowers.</text>
</comment>
<comment type="similarity">
    <text evidence="8">Belongs to the cytidine and deoxycytidylate deaminase family.</text>
</comment>
<comment type="sequence caution" evidence="8">
    <conflict type="miscellaneous discrepancy">
        <sequence resource="EMBL-CDS" id="AAD30449"/>
    </conflict>
    <text>Sequencing errors.</text>
</comment>
<keyword id="KW-0002">3D-structure</keyword>
<keyword id="KW-0378">Hydrolase</keyword>
<keyword id="KW-0479">Metal-binding</keyword>
<keyword id="KW-1185">Reference proteome</keyword>
<keyword id="KW-0862">Zinc</keyword>
<proteinExistence type="evidence at protein level"/>